<name>DAPE_ALLAM</name>
<reference key="1">
    <citation type="journal article" date="2009" name="J. Bacteriol.">
        <title>Genome sequences of three Agrobacterium biovars help elucidate the evolution of multichromosome genomes in bacteria.</title>
        <authorList>
            <person name="Slater S.C."/>
            <person name="Goldman B.S."/>
            <person name="Goodner B."/>
            <person name="Setubal J.C."/>
            <person name="Farrand S.K."/>
            <person name="Nester E.W."/>
            <person name="Burr T.J."/>
            <person name="Banta L."/>
            <person name="Dickerman A.W."/>
            <person name="Paulsen I."/>
            <person name="Otten L."/>
            <person name="Suen G."/>
            <person name="Welch R."/>
            <person name="Almeida N.F."/>
            <person name="Arnold F."/>
            <person name="Burton O.T."/>
            <person name="Du Z."/>
            <person name="Ewing A."/>
            <person name="Godsy E."/>
            <person name="Heisel S."/>
            <person name="Houmiel K.L."/>
            <person name="Jhaveri J."/>
            <person name="Lu J."/>
            <person name="Miller N.M."/>
            <person name="Norton S."/>
            <person name="Chen Q."/>
            <person name="Phoolcharoen W."/>
            <person name="Ohlin V."/>
            <person name="Ondrusek D."/>
            <person name="Pride N."/>
            <person name="Stricklin S.L."/>
            <person name="Sun J."/>
            <person name="Wheeler C."/>
            <person name="Wilson L."/>
            <person name="Zhu H."/>
            <person name="Wood D.W."/>
        </authorList>
    </citation>
    <scope>NUCLEOTIDE SEQUENCE [LARGE SCALE GENOMIC DNA]</scope>
    <source>
        <strain>ATCC BAA-846 / DSM 112012 / S4</strain>
    </source>
</reference>
<evidence type="ECO:0000255" key="1">
    <source>
        <dbReference type="HAMAP-Rule" id="MF_01690"/>
    </source>
</evidence>
<dbReference type="EC" id="3.5.1.18" evidence="1"/>
<dbReference type="EMBL" id="CP000633">
    <property type="protein sequence ID" value="ACM35331.1"/>
    <property type="molecule type" value="Genomic_DNA"/>
</dbReference>
<dbReference type="RefSeq" id="WP_015914759.1">
    <property type="nucleotide sequence ID" value="NC_011989.1"/>
</dbReference>
<dbReference type="SMR" id="B9JZL9"/>
<dbReference type="STRING" id="311402.Avi_0474"/>
<dbReference type="KEGG" id="avi:Avi_0474"/>
<dbReference type="eggNOG" id="COG0624">
    <property type="taxonomic scope" value="Bacteria"/>
</dbReference>
<dbReference type="HOGENOM" id="CLU_021802_4_0_5"/>
<dbReference type="UniPathway" id="UPA00034">
    <property type="reaction ID" value="UER00021"/>
</dbReference>
<dbReference type="Proteomes" id="UP000001596">
    <property type="component" value="Chromosome 1"/>
</dbReference>
<dbReference type="GO" id="GO:0008777">
    <property type="term" value="F:acetylornithine deacetylase activity"/>
    <property type="evidence" value="ECO:0007669"/>
    <property type="project" value="TreeGrafter"/>
</dbReference>
<dbReference type="GO" id="GO:0050897">
    <property type="term" value="F:cobalt ion binding"/>
    <property type="evidence" value="ECO:0007669"/>
    <property type="project" value="UniProtKB-UniRule"/>
</dbReference>
<dbReference type="GO" id="GO:0009014">
    <property type="term" value="F:succinyl-diaminopimelate desuccinylase activity"/>
    <property type="evidence" value="ECO:0007669"/>
    <property type="project" value="UniProtKB-UniRule"/>
</dbReference>
<dbReference type="GO" id="GO:0008270">
    <property type="term" value="F:zinc ion binding"/>
    <property type="evidence" value="ECO:0007669"/>
    <property type="project" value="UniProtKB-UniRule"/>
</dbReference>
<dbReference type="GO" id="GO:0019877">
    <property type="term" value="P:diaminopimelate biosynthetic process"/>
    <property type="evidence" value="ECO:0007669"/>
    <property type="project" value="UniProtKB-UniRule"/>
</dbReference>
<dbReference type="GO" id="GO:0006526">
    <property type="term" value="P:L-arginine biosynthetic process"/>
    <property type="evidence" value="ECO:0007669"/>
    <property type="project" value="TreeGrafter"/>
</dbReference>
<dbReference type="GO" id="GO:0009089">
    <property type="term" value="P:lysine biosynthetic process via diaminopimelate"/>
    <property type="evidence" value="ECO:0007669"/>
    <property type="project" value="UniProtKB-UniRule"/>
</dbReference>
<dbReference type="CDD" id="cd03891">
    <property type="entry name" value="M20_DapE_proteobac"/>
    <property type="match status" value="1"/>
</dbReference>
<dbReference type="Gene3D" id="3.30.70.360">
    <property type="match status" value="1"/>
</dbReference>
<dbReference type="Gene3D" id="3.40.630.10">
    <property type="entry name" value="Zn peptidases"/>
    <property type="match status" value="2"/>
</dbReference>
<dbReference type="HAMAP" id="MF_01690">
    <property type="entry name" value="DapE"/>
    <property type="match status" value="1"/>
</dbReference>
<dbReference type="InterPro" id="IPR001261">
    <property type="entry name" value="ArgE/DapE_CS"/>
</dbReference>
<dbReference type="InterPro" id="IPR036264">
    <property type="entry name" value="Bact_exopeptidase_dim_dom"/>
</dbReference>
<dbReference type="InterPro" id="IPR005941">
    <property type="entry name" value="DapE_proteobac"/>
</dbReference>
<dbReference type="InterPro" id="IPR002933">
    <property type="entry name" value="Peptidase_M20"/>
</dbReference>
<dbReference type="InterPro" id="IPR011650">
    <property type="entry name" value="Peptidase_M20_dimer"/>
</dbReference>
<dbReference type="InterPro" id="IPR050072">
    <property type="entry name" value="Peptidase_M20A"/>
</dbReference>
<dbReference type="NCBIfam" id="TIGR01246">
    <property type="entry name" value="dapE_proteo"/>
    <property type="match status" value="1"/>
</dbReference>
<dbReference type="NCBIfam" id="NF009557">
    <property type="entry name" value="PRK13009.1"/>
    <property type="match status" value="1"/>
</dbReference>
<dbReference type="PANTHER" id="PTHR43808">
    <property type="entry name" value="ACETYLORNITHINE DEACETYLASE"/>
    <property type="match status" value="1"/>
</dbReference>
<dbReference type="PANTHER" id="PTHR43808:SF31">
    <property type="entry name" value="N-ACETYL-L-CITRULLINE DEACETYLASE"/>
    <property type="match status" value="1"/>
</dbReference>
<dbReference type="Pfam" id="PF07687">
    <property type="entry name" value="M20_dimer"/>
    <property type="match status" value="1"/>
</dbReference>
<dbReference type="Pfam" id="PF01546">
    <property type="entry name" value="Peptidase_M20"/>
    <property type="match status" value="1"/>
</dbReference>
<dbReference type="SUPFAM" id="SSF55031">
    <property type="entry name" value="Bacterial exopeptidase dimerisation domain"/>
    <property type="match status" value="1"/>
</dbReference>
<dbReference type="SUPFAM" id="SSF53187">
    <property type="entry name" value="Zn-dependent exopeptidases"/>
    <property type="match status" value="1"/>
</dbReference>
<dbReference type="PROSITE" id="PS00758">
    <property type="entry name" value="ARGE_DAPE_CPG2_1"/>
    <property type="match status" value="1"/>
</dbReference>
<dbReference type="PROSITE" id="PS00759">
    <property type="entry name" value="ARGE_DAPE_CPG2_2"/>
    <property type="match status" value="1"/>
</dbReference>
<organism>
    <name type="scientific">Allorhizobium ampelinum (strain ATCC BAA-846 / DSM 112012 / S4)</name>
    <name type="common">Agrobacterium vitis (strain S4)</name>
    <dbReference type="NCBI Taxonomy" id="311402"/>
    <lineage>
        <taxon>Bacteria</taxon>
        <taxon>Pseudomonadati</taxon>
        <taxon>Pseudomonadota</taxon>
        <taxon>Alphaproteobacteria</taxon>
        <taxon>Hyphomicrobiales</taxon>
        <taxon>Rhizobiaceae</taxon>
        <taxon>Rhizobium/Agrobacterium group</taxon>
        <taxon>Allorhizobium</taxon>
        <taxon>Allorhizobium ampelinum</taxon>
    </lineage>
</organism>
<comment type="function">
    <text evidence="1">Catalyzes the hydrolysis of N-succinyl-L,L-diaminopimelic acid (SDAP), forming succinate and LL-2,6-diaminopimelate (DAP), an intermediate involved in the bacterial biosynthesis of lysine and meso-diaminopimelic acid, an essential component of bacterial cell walls.</text>
</comment>
<comment type="catalytic activity">
    <reaction evidence="1">
        <text>N-succinyl-(2S,6S)-2,6-diaminopimelate + H2O = (2S,6S)-2,6-diaminopimelate + succinate</text>
        <dbReference type="Rhea" id="RHEA:22608"/>
        <dbReference type="ChEBI" id="CHEBI:15377"/>
        <dbReference type="ChEBI" id="CHEBI:30031"/>
        <dbReference type="ChEBI" id="CHEBI:57609"/>
        <dbReference type="ChEBI" id="CHEBI:58087"/>
        <dbReference type="EC" id="3.5.1.18"/>
    </reaction>
</comment>
<comment type="cofactor">
    <cofactor evidence="1">
        <name>Zn(2+)</name>
        <dbReference type="ChEBI" id="CHEBI:29105"/>
    </cofactor>
    <cofactor evidence="1">
        <name>Co(2+)</name>
        <dbReference type="ChEBI" id="CHEBI:48828"/>
    </cofactor>
    <text evidence="1">Binds 2 Zn(2+) or Co(2+) ions per subunit.</text>
</comment>
<comment type="pathway">
    <text evidence="1">Amino-acid biosynthesis; L-lysine biosynthesis via DAP pathway; LL-2,6-diaminopimelate from (S)-tetrahydrodipicolinate (succinylase route): step 3/3.</text>
</comment>
<comment type="subunit">
    <text evidence="1">Homodimer.</text>
</comment>
<comment type="similarity">
    <text evidence="1">Belongs to the peptidase M20A family. DapE subfamily.</text>
</comment>
<protein>
    <recommendedName>
        <fullName evidence="1">Succinyl-diaminopimelate desuccinylase</fullName>
        <shortName evidence="1">SDAP desuccinylase</shortName>
        <ecNumber evidence="1">3.5.1.18</ecNumber>
    </recommendedName>
    <alternativeName>
        <fullName evidence="1">N-succinyl-LL-2,6-diaminoheptanedioate amidohydrolase</fullName>
    </alternativeName>
</protein>
<feature type="chain" id="PRO_0000375457" description="Succinyl-diaminopimelate desuccinylase">
    <location>
        <begin position="1"/>
        <end position="404"/>
    </location>
</feature>
<feature type="active site" evidence="1">
    <location>
        <position position="82"/>
    </location>
</feature>
<feature type="active site" description="Proton acceptor" evidence="1">
    <location>
        <position position="147"/>
    </location>
</feature>
<feature type="binding site" evidence="1">
    <location>
        <position position="80"/>
    </location>
    <ligand>
        <name>Zn(2+)</name>
        <dbReference type="ChEBI" id="CHEBI:29105"/>
        <label>1</label>
    </ligand>
</feature>
<feature type="binding site" evidence="1">
    <location>
        <position position="113"/>
    </location>
    <ligand>
        <name>Zn(2+)</name>
        <dbReference type="ChEBI" id="CHEBI:29105"/>
        <label>1</label>
    </ligand>
</feature>
<feature type="binding site" evidence="1">
    <location>
        <position position="113"/>
    </location>
    <ligand>
        <name>Zn(2+)</name>
        <dbReference type="ChEBI" id="CHEBI:29105"/>
        <label>2</label>
    </ligand>
</feature>
<feature type="binding site" evidence="1">
    <location>
        <position position="148"/>
    </location>
    <ligand>
        <name>Zn(2+)</name>
        <dbReference type="ChEBI" id="CHEBI:29105"/>
        <label>2</label>
    </ligand>
</feature>
<feature type="binding site" evidence="1">
    <location>
        <position position="176"/>
    </location>
    <ligand>
        <name>Zn(2+)</name>
        <dbReference type="ChEBI" id="CHEBI:29105"/>
        <label>1</label>
    </ligand>
</feature>
<feature type="binding site" evidence="1">
    <location>
        <position position="373"/>
    </location>
    <ligand>
        <name>Zn(2+)</name>
        <dbReference type="ChEBI" id="CHEBI:29105"/>
        <label>2</label>
    </ligand>
</feature>
<sequence length="404" mass="42915">MSKHPANSSATDPVDNLQTLIRCPSVTPAEGGALSALAAMLEPLGFTVERMVAREEGTPDVENLYARLGTEGPHLMFAGHTDVVPVGNEADWTYPPFSAEIAGGELYGRGAVDMKGGIACFVAAIARHIESQGAPKGSISFLITGDEEGPSINGTTKLLEWAAAKGERWDACLVGEPTNPDQLGDMIKIGRRGSLSGEIIVKGVQGHAAYPHLADNPVRGMIKLAEALMHPAFDAGTENFQPSNLEVTTIDVGNAATNVIPARASAKFNIRFNDTWTAETLRTEIIARLDTASADPLLRPGRPPIAYELVWADRPSQVFLTRNNALISSLSAAIEKMTGKTPALSTTGGTSDARFIKDYCPVVEFGLVGQTMHMVDERVAVSDLEALTGIYGAFISSWFTHAGA</sequence>
<proteinExistence type="inferred from homology"/>
<accession>B9JZL9</accession>
<keyword id="KW-0028">Amino-acid biosynthesis</keyword>
<keyword id="KW-0170">Cobalt</keyword>
<keyword id="KW-0220">Diaminopimelate biosynthesis</keyword>
<keyword id="KW-0378">Hydrolase</keyword>
<keyword id="KW-0457">Lysine biosynthesis</keyword>
<keyword id="KW-0479">Metal-binding</keyword>
<keyword id="KW-1185">Reference proteome</keyword>
<keyword id="KW-0862">Zinc</keyword>
<gene>
    <name evidence="1" type="primary">dapE</name>
    <name type="ordered locus">Avi_0474</name>
</gene>